<feature type="chain" id="PRO_0000088979" description="Actin, cytoplasmic">
    <location>
        <begin position="1"/>
        <end position="375"/>
    </location>
</feature>
<sequence>MSDQQTCVIDNGSGVVKAGFAGEDAPRAVFPSIVGRPKNVSALIGVDSASEYLGDEAQQKRGVLKIFYPIEHGIVKDWDDMEKIWNHTFYVELRVQPDEHPILLTEAPLNPKTNREKMTQIMFETFNVPALYVVIQAVLSLYSAGSTTGIVCDAGDGVTHTVPIYEGFSIPHAVSRIQLAGRDLTTFMAKLLTERGYNFTSSAELEIVRDIKEKLCFVALEYESALKQSHDSSQFEKNYELPDGKVITIGSERFRCPEYLFKPLEMNGRELDSIQDLTYKSIQECDVDVRRDLYQNIIISGGTTMNEGIGERLLKEIENRAPKSINVKVIASADRIFAVWRGGSTRTSLSTFASMWITKEDYDENGASIVHRKCI</sequence>
<proteinExistence type="inferred from homology"/>
<evidence type="ECO:0000250" key="1">
    <source>
        <dbReference type="UniProtKB" id="P68137"/>
    </source>
</evidence>
<evidence type="ECO:0000305" key="2"/>
<protein>
    <recommendedName>
        <fullName>Actin, cytoplasmic</fullName>
        <ecNumber evidence="1">3.6.4.-</ecNumber>
    </recommendedName>
    <alternativeName>
        <fullName>Actin, micronuclear</fullName>
    </alternativeName>
</protein>
<accession>P53469</accession>
<reference key="1">
    <citation type="journal article" date="1995" name="Proc. Natl. Acad. Sci. U.S.A.">
        <title>Scrambling of the actin I gene in two Oxytricha species.</title>
        <authorList>
            <person name="Dubois M."/>
            <person name="Prescott D.M."/>
        </authorList>
    </citation>
    <scope>NUCLEOTIDE SEQUENCE [GENOMIC DNA]</scope>
    <source>
        <strain>WR</strain>
    </source>
</reference>
<comment type="function">
    <text>Actins are highly conserved proteins that are involved in various types of cell motility and are ubiquitously expressed in all eukaryotic cells.</text>
</comment>
<comment type="catalytic activity">
    <reaction evidence="1">
        <text>ATP + H2O = ADP + phosphate + H(+)</text>
        <dbReference type="Rhea" id="RHEA:13065"/>
        <dbReference type="ChEBI" id="CHEBI:15377"/>
        <dbReference type="ChEBI" id="CHEBI:15378"/>
        <dbReference type="ChEBI" id="CHEBI:30616"/>
        <dbReference type="ChEBI" id="CHEBI:43474"/>
        <dbReference type="ChEBI" id="CHEBI:456216"/>
    </reaction>
</comment>
<comment type="subcellular location">
    <subcellularLocation>
        <location>Cytoplasm</location>
        <location>Cytoskeleton</location>
    </subcellularLocation>
</comment>
<comment type="similarity">
    <text evidence="2">Belongs to the actin family.</text>
</comment>
<organism>
    <name type="scientific">Oxytricha trifallax</name>
    <name type="common">Sterkiella histriomuscorum</name>
    <dbReference type="NCBI Taxonomy" id="94289"/>
    <lineage>
        <taxon>Eukaryota</taxon>
        <taxon>Sar</taxon>
        <taxon>Alveolata</taxon>
        <taxon>Ciliophora</taxon>
        <taxon>Intramacronucleata</taxon>
        <taxon>Spirotrichea</taxon>
        <taxon>Stichotrichia</taxon>
        <taxon>Sporadotrichida</taxon>
        <taxon>Oxytrichidae</taxon>
        <taxon>Stylonychinae</taxon>
        <taxon>Sterkiella</taxon>
    </lineage>
</organism>
<name>ACT2_OXYTR</name>
<dbReference type="EC" id="3.6.4.-" evidence="1"/>
<dbReference type="EMBL" id="U19288">
    <property type="protein sequence ID" value="AAA85839.1"/>
    <property type="molecule type" value="Genomic_DNA"/>
</dbReference>
<dbReference type="SMR" id="P53469"/>
<dbReference type="GO" id="GO:0005737">
    <property type="term" value="C:cytoplasm"/>
    <property type="evidence" value="ECO:0007669"/>
    <property type="project" value="UniProtKB-KW"/>
</dbReference>
<dbReference type="GO" id="GO:0005856">
    <property type="term" value="C:cytoskeleton"/>
    <property type="evidence" value="ECO:0007669"/>
    <property type="project" value="UniProtKB-SubCell"/>
</dbReference>
<dbReference type="GO" id="GO:0005524">
    <property type="term" value="F:ATP binding"/>
    <property type="evidence" value="ECO:0007669"/>
    <property type="project" value="UniProtKB-KW"/>
</dbReference>
<dbReference type="GO" id="GO:0016787">
    <property type="term" value="F:hydrolase activity"/>
    <property type="evidence" value="ECO:0007669"/>
    <property type="project" value="UniProtKB-KW"/>
</dbReference>
<dbReference type="FunFam" id="3.30.420.40:FF:000291">
    <property type="entry name" value="Actin, alpha skeletal muscle"/>
    <property type="match status" value="1"/>
</dbReference>
<dbReference type="FunFam" id="3.90.640.10:FF:000047">
    <property type="entry name" value="Actin, alpha skeletal muscle"/>
    <property type="match status" value="1"/>
</dbReference>
<dbReference type="Gene3D" id="3.30.420.40">
    <property type="match status" value="2"/>
</dbReference>
<dbReference type="Gene3D" id="3.90.640.10">
    <property type="entry name" value="Actin, Chain A, domain 4"/>
    <property type="match status" value="1"/>
</dbReference>
<dbReference type="InterPro" id="IPR004000">
    <property type="entry name" value="Actin"/>
</dbReference>
<dbReference type="InterPro" id="IPR020902">
    <property type="entry name" value="Actin/actin-like_CS"/>
</dbReference>
<dbReference type="InterPro" id="IPR004001">
    <property type="entry name" value="Actin_CS"/>
</dbReference>
<dbReference type="InterPro" id="IPR043129">
    <property type="entry name" value="ATPase_NBD"/>
</dbReference>
<dbReference type="PANTHER" id="PTHR11937">
    <property type="entry name" value="ACTIN"/>
    <property type="match status" value="1"/>
</dbReference>
<dbReference type="Pfam" id="PF00022">
    <property type="entry name" value="Actin"/>
    <property type="match status" value="1"/>
</dbReference>
<dbReference type="PRINTS" id="PR00190">
    <property type="entry name" value="ACTIN"/>
</dbReference>
<dbReference type="SMART" id="SM00268">
    <property type="entry name" value="ACTIN"/>
    <property type="match status" value="1"/>
</dbReference>
<dbReference type="SUPFAM" id="SSF53067">
    <property type="entry name" value="Actin-like ATPase domain"/>
    <property type="match status" value="2"/>
</dbReference>
<dbReference type="PROSITE" id="PS00406">
    <property type="entry name" value="ACTINS_1"/>
    <property type="match status" value="1"/>
</dbReference>
<dbReference type="PROSITE" id="PS00432">
    <property type="entry name" value="ACTINS_2"/>
    <property type="match status" value="1"/>
</dbReference>
<dbReference type="PROSITE" id="PS01132">
    <property type="entry name" value="ACTINS_ACT_LIKE"/>
    <property type="match status" value="1"/>
</dbReference>
<keyword id="KW-0067">ATP-binding</keyword>
<keyword id="KW-0963">Cytoplasm</keyword>
<keyword id="KW-0206">Cytoskeleton</keyword>
<keyword id="KW-0378">Hydrolase</keyword>
<keyword id="KW-0547">Nucleotide-binding</keyword>